<name>DAPE_ECOL6</name>
<protein>
    <recommendedName>
        <fullName evidence="1">Succinyl-diaminopimelate desuccinylase</fullName>
        <shortName evidence="1">SDAP desuccinylase</shortName>
        <ecNumber evidence="1">3.5.1.18</ecNumber>
    </recommendedName>
    <alternativeName>
        <fullName evidence="1">N-succinyl-LL-2,6-diaminoheptanedioate amidohydrolase</fullName>
    </alternativeName>
</protein>
<proteinExistence type="inferred from homology"/>
<comment type="function">
    <text evidence="1">Catalyzes the hydrolysis of N-succinyl-L,L-diaminopimelic acid (SDAP), forming succinate and LL-2,6-diaminopimelate (DAP), an intermediate involved in the bacterial biosynthesis of lysine and meso-diaminopimelic acid, an essential component of bacterial cell walls.</text>
</comment>
<comment type="catalytic activity">
    <reaction evidence="1">
        <text>N-succinyl-(2S,6S)-2,6-diaminopimelate + H2O = (2S,6S)-2,6-diaminopimelate + succinate</text>
        <dbReference type="Rhea" id="RHEA:22608"/>
        <dbReference type="ChEBI" id="CHEBI:15377"/>
        <dbReference type="ChEBI" id="CHEBI:30031"/>
        <dbReference type="ChEBI" id="CHEBI:57609"/>
        <dbReference type="ChEBI" id="CHEBI:58087"/>
        <dbReference type="EC" id="3.5.1.18"/>
    </reaction>
</comment>
<comment type="cofactor">
    <cofactor evidence="1">
        <name>Zn(2+)</name>
        <dbReference type="ChEBI" id="CHEBI:29105"/>
    </cofactor>
    <cofactor evidence="1">
        <name>Co(2+)</name>
        <dbReference type="ChEBI" id="CHEBI:48828"/>
    </cofactor>
    <text evidence="1">Binds 2 Zn(2+) or Co(2+) ions per subunit.</text>
</comment>
<comment type="pathway">
    <text evidence="1">Amino-acid biosynthesis; L-lysine biosynthesis via DAP pathway; LL-2,6-diaminopimelate from (S)-tetrahydrodipicolinate (succinylase route): step 3/3.</text>
</comment>
<comment type="subunit">
    <text evidence="1">Homodimer.</text>
</comment>
<comment type="similarity">
    <text evidence="1">Belongs to the peptidase M20A family. DapE subfamily.</text>
</comment>
<gene>
    <name evidence="1" type="primary">dapE</name>
    <name type="ordered locus">c2999</name>
</gene>
<feature type="chain" id="PRO_0000375566" description="Succinyl-diaminopimelate desuccinylase">
    <location>
        <begin position="1"/>
        <end position="375"/>
    </location>
</feature>
<feature type="active site" evidence="1">
    <location>
        <position position="68"/>
    </location>
</feature>
<feature type="active site" description="Proton acceptor" evidence="1">
    <location>
        <position position="133"/>
    </location>
</feature>
<feature type="binding site" evidence="1">
    <location>
        <position position="66"/>
    </location>
    <ligand>
        <name>Zn(2+)</name>
        <dbReference type="ChEBI" id="CHEBI:29105"/>
        <label>1</label>
    </ligand>
</feature>
<feature type="binding site" evidence="1">
    <location>
        <position position="99"/>
    </location>
    <ligand>
        <name>Zn(2+)</name>
        <dbReference type="ChEBI" id="CHEBI:29105"/>
        <label>1</label>
    </ligand>
</feature>
<feature type="binding site" evidence="1">
    <location>
        <position position="99"/>
    </location>
    <ligand>
        <name>Zn(2+)</name>
        <dbReference type="ChEBI" id="CHEBI:29105"/>
        <label>2</label>
    </ligand>
</feature>
<feature type="binding site" evidence="1">
    <location>
        <position position="134"/>
    </location>
    <ligand>
        <name>Zn(2+)</name>
        <dbReference type="ChEBI" id="CHEBI:29105"/>
        <label>2</label>
    </ligand>
</feature>
<feature type="binding site" evidence="1">
    <location>
        <position position="162"/>
    </location>
    <ligand>
        <name>Zn(2+)</name>
        <dbReference type="ChEBI" id="CHEBI:29105"/>
        <label>1</label>
    </ligand>
</feature>
<feature type="binding site" evidence="1">
    <location>
        <position position="348"/>
    </location>
    <ligand>
        <name>Zn(2+)</name>
        <dbReference type="ChEBI" id="CHEBI:29105"/>
        <label>2</label>
    </ligand>
</feature>
<accession>Q8FF82</accession>
<evidence type="ECO:0000255" key="1">
    <source>
        <dbReference type="HAMAP-Rule" id="MF_01690"/>
    </source>
</evidence>
<sequence length="375" mass="41269">MSCPVIELTQQLIRRPSLSPDDAGCQALLIERLQAIGFTVERMDFADTQNFWAWRGQGETLAFAGHTDVVPPGDADRWINPPFEPTIRDGMLFGRGAADMKGSLAAMVVAAERFVAQHPNHTGRLAFLITSDEEASAHNGTVKVVEALMARNERLDYCLVGEPSSIEVVGDVVKNGRRGSLTCNLTIHGVQGHVAYPHLADNPVHRAAPFINELVAIEWDQGNEFFPATSMQIANIQAGTGSNNVIPGELFVQFNFRFSTELTDEMIKAQVLALLEKHQLRYTVDWWLSGQPFLTARGKLVDAVVNAVEHYNEIKPQLLTTGGTSDGRFIARMGAQVVELGPVNATIHKINECVNAADLQLLARMYQRIMEQLVA</sequence>
<reference key="1">
    <citation type="journal article" date="2002" name="Proc. Natl. Acad. Sci. U.S.A.">
        <title>Extensive mosaic structure revealed by the complete genome sequence of uropathogenic Escherichia coli.</title>
        <authorList>
            <person name="Welch R.A."/>
            <person name="Burland V."/>
            <person name="Plunkett G. III"/>
            <person name="Redford P."/>
            <person name="Roesch P."/>
            <person name="Rasko D."/>
            <person name="Buckles E.L."/>
            <person name="Liou S.-R."/>
            <person name="Boutin A."/>
            <person name="Hackett J."/>
            <person name="Stroud D."/>
            <person name="Mayhew G.F."/>
            <person name="Rose D.J."/>
            <person name="Zhou S."/>
            <person name="Schwartz D.C."/>
            <person name="Perna N.T."/>
            <person name="Mobley H.L.T."/>
            <person name="Donnenberg M.S."/>
            <person name="Blattner F.R."/>
        </authorList>
    </citation>
    <scope>NUCLEOTIDE SEQUENCE [LARGE SCALE GENOMIC DNA]</scope>
    <source>
        <strain>CFT073 / ATCC 700928 / UPEC</strain>
    </source>
</reference>
<dbReference type="EC" id="3.5.1.18" evidence="1"/>
<dbReference type="EMBL" id="AE014075">
    <property type="protein sequence ID" value="AAN81449.1"/>
    <property type="molecule type" value="Genomic_DNA"/>
</dbReference>
<dbReference type="RefSeq" id="WP_001277797.1">
    <property type="nucleotide sequence ID" value="NZ_CP051263.1"/>
</dbReference>
<dbReference type="SMR" id="Q8FF82"/>
<dbReference type="STRING" id="199310.c2999"/>
<dbReference type="MEROPS" id="M20.010"/>
<dbReference type="KEGG" id="ecc:c2999"/>
<dbReference type="eggNOG" id="COG0624">
    <property type="taxonomic scope" value="Bacteria"/>
</dbReference>
<dbReference type="HOGENOM" id="CLU_021802_4_0_6"/>
<dbReference type="BioCyc" id="ECOL199310:C2999-MONOMER"/>
<dbReference type="UniPathway" id="UPA00034">
    <property type="reaction ID" value="UER00021"/>
</dbReference>
<dbReference type="Proteomes" id="UP000001410">
    <property type="component" value="Chromosome"/>
</dbReference>
<dbReference type="GO" id="GO:0008777">
    <property type="term" value="F:acetylornithine deacetylase activity"/>
    <property type="evidence" value="ECO:0007669"/>
    <property type="project" value="TreeGrafter"/>
</dbReference>
<dbReference type="GO" id="GO:0050897">
    <property type="term" value="F:cobalt ion binding"/>
    <property type="evidence" value="ECO:0007669"/>
    <property type="project" value="UniProtKB-UniRule"/>
</dbReference>
<dbReference type="GO" id="GO:0009014">
    <property type="term" value="F:succinyl-diaminopimelate desuccinylase activity"/>
    <property type="evidence" value="ECO:0007669"/>
    <property type="project" value="UniProtKB-UniRule"/>
</dbReference>
<dbReference type="GO" id="GO:0008270">
    <property type="term" value="F:zinc ion binding"/>
    <property type="evidence" value="ECO:0007669"/>
    <property type="project" value="UniProtKB-UniRule"/>
</dbReference>
<dbReference type="GO" id="GO:0019877">
    <property type="term" value="P:diaminopimelate biosynthetic process"/>
    <property type="evidence" value="ECO:0007669"/>
    <property type="project" value="UniProtKB-UniRule"/>
</dbReference>
<dbReference type="GO" id="GO:0006526">
    <property type="term" value="P:L-arginine biosynthetic process"/>
    <property type="evidence" value="ECO:0007669"/>
    <property type="project" value="TreeGrafter"/>
</dbReference>
<dbReference type="GO" id="GO:0009089">
    <property type="term" value="P:lysine biosynthetic process via diaminopimelate"/>
    <property type="evidence" value="ECO:0007669"/>
    <property type="project" value="UniProtKB-UniRule"/>
</dbReference>
<dbReference type="CDD" id="cd03891">
    <property type="entry name" value="M20_DapE_proteobac"/>
    <property type="match status" value="1"/>
</dbReference>
<dbReference type="FunFam" id="3.30.70.360:FF:000011">
    <property type="entry name" value="Succinyl-diaminopimelate desuccinylase"/>
    <property type="match status" value="1"/>
</dbReference>
<dbReference type="FunFam" id="3.40.630.10:FF:000005">
    <property type="entry name" value="Succinyl-diaminopimelate desuccinylase"/>
    <property type="match status" value="1"/>
</dbReference>
<dbReference type="FunFam" id="3.40.630.10:FF:000010">
    <property type="entry name" value="Succinyl-diaminopimelate desuccinylase"/>
    <property type="match status" value="1"/>
</dbReference>
<dbReference type="Gene3D" id="3.40.630.10">
    <property type="entry name" value="Zn peptidases"/>
    <property type="match status" value="2"/>
</dbReference>
<dbReference type="HAMAP" id="MF_01690">
    <property type="entry name" value="DapE"/>
    <property type="match status" value="1"/>
</dbReference>
<dbReference type="InterPro" id="IPR001261">
    <property type="entry name" value="ArgE/DapE_CS"/>
</dbReference>
<dbReference type="InterPro" id="IPR036264">
    <property type="entry name" value="Bact_exopeptidase_dim_dom"/>
</dbReference>
<dbReference type="InterPro" id="IPR005941">
    <property type="entry name" value="DapE_proteobac"/>
</dbReference>
<dbReference type="InterPro" id="IPR002933">
    <property type="entry name" value="Peptidase_M20"/>
</dbReference>
<dbReference type="InterPro" id="IPR011650">
    <property type="entry name" value="Peptidase_M20_dimer"/>
</dbReference>
<dbReference type="InterPro" id="IPR050072">
    <property type="entry name" value="Peptidase_M20A"/>
</dbReference>
<dbReference type="NCBIfam" id="TIGR01246">
    <property type="entry name" value="dapE_proteo"/>
    <property type="match status" value="1"/>
</dbReference>
<dbReference type="NCBIfam" id="NF009557">
    <property type="entry name" value="PRK13009.1"/>
    <property type="match status" value="1"/>
</dbReference>
<dbReference type="PANTHER" id="PTHR43808">
    <property type="entry name" value="ACETYLORNITHINE DEACETYLASE"/>
    <property type="match status" value="1"/>
</dbReference>
<dbReference type="PANTHER" id="PTHR43808:SF31">
    <property type="entry name" value="N-ACETYL-L-CITRULLINE DEACETYLASE"/>
    <property type="match status" value="1"/>
</dbReference>
<dbReference type="Pfam" id="PF07687">
    <property type="entry name" value="M20_dimer"/>
    <property type="match status" value="1"/>
</dbReference>
<dbReference type="Pfam" id="PF01546">
    <property type="entry name" value="Peptidase_M20"/>
    <property type="match status" value="1"/>
</dbReference>
<dbReference type="SUPFAM" id="SSF55031">
    <property type="entry name" value="Bacterial exopeptidase dimerisation domain"/>
    <property type="match status" value="1"/>
</dbReference>
<dbReference type="SUPFAM" id="SSF53187">
    <property type="entry name" value="Zn-dependent exopeptidases"/>
    <property type="match status" value="1"/>
</dbReference>
<dbReference type="PROSITE" id="PS00758">
    <property type="entry name" value="ARGE_DAPE_CPG2_1"/>
    <property type="match status" value="1"/>
</dbReference>
<dbReference type="PROSITE" id="PS00759">
    <property type="entry name" value="ARGE_DAPE_CPG2_2"/>
    <property type="match status" value="1"/>
</dbReference>
<keyword id="KW-0028">Amino-acid biosynthesis</keyword>
<keyword id="KW-0170">Cobalt</keyword>
<keyword id="KW-0220">Diaminopimelate biosynthesis</keyword>
<keyword id="KW-0378">Hydrolase</keyword>
<keyword id="KW-0457">Lysine biosynthesis</keyword>
<keyword id="KW-0479">Metal-binding</keyword>
<keyword id="KW-1185">Reference proteome</keyword>
<keyword id="KW-0862">Zinc</keyword>
<organism>
    <name type="scientific">Escherichia coli O6:H1 (strain CFT073 / ATCC 700928 / UPEC)</name>
    <dbReference type="NCBI Taxonomy" id="199310"/>
    <lineage>
        <taxon>Bacteria</taxon>
        <taxon>Pseudomonadati</taxon>
        <taxon>Pseudomonadota</taxon>
        <taxon>Gammaproteobacteria</taxon>
        <taxon>Enterobacterales</taxon>
        <taxon>Enterobacteriaceae</taxon>
        <taxon>Escherichia</taxon>
    </lineage>
</organism>